<accession>Q9X6W8</accession>
<gene>
    <name evidence="1" type="primary">clpP</name>
</gene>
<sequence>MYDFEPKMNALVPMVIEQTNRGERGYDIYSRLLKERIIFLIGGVNDAVASLICSQLLFLESENPSKDIALYINSPGGYVSAGLAIYDTMQYIRPQVSTVCMGQAASMGSLLLAAGAPGKRFSLPNSRIMIHQPSGGAQGQASDIEIQAQEILKLRSRLNDIYVKHTGQSLDTIEAXMERDKFMSPEEAKAFGLIDEVVEKRPGSIGDGAA</sequence>
<organism>
    <name type="scientific">Azospirillum brasilense</name>
    <dbReference type="NCBI Taxonomy" id="192"/>
    <lineage>
        <taxon>Bacteria</taxon>
        <taxon>Pseudomonadati</taxon>
        <taxon>Pseudomonadota</taxon>
        <taxon>Alphaproteobacteria</taxon>
        <taxon>Rhodospirillales</taxon>
        <taxon>Azospirillaceae</taxon>
        <taxon>Azospirillum</taxon>
    </lineage>
</organism>
<proteinExistence type="inferred from homology"/>
<name>CLPP_AZOBR</name>
<keyword id="KW-0963">Cytoplasm</keyword>
<keyword id="KW-0378">Hydrolase</keyword>
<keyword id="KW-0645">Protease</keyword>
<keyword id="KW-0720">Serine protease</keyword>
<evidence type="ECO:0000255" key="1">
    <source>
        <dbReference type="HAMAP-Rule" id="MF_00444"/>
    </source>
</evidence>
<feature type="chain" id="PRO_0000179482" description="ATP-dependent Clp protease proteolytic subunit">
    <location>
        <begin position="1"/>
        <end position="210"/>
    </location>
</feature>
<feature type="active site" description="Nucleophile" evidence="1">
    <location>
        <position position="106"/>
    </location>
</feature>
<feature type="active site" evidence="1">
    <location>
        <position position="131"/>
    </location>
</feature>
<reference key="1">
    <citation type="submission" date="1999-05" db="EMBL/GenBank/DDBJ databases">
        <title>Azospirillum brasilense tig-clp-clpx-lon.</title>
        <authorList>
            <person name="Indorato C."/>
            <person name="Giannelli L."/>
            <person name="Bazzicalupo M."/>
        </authorList>
    </citation>
    <scope>NUCLEOTIDE SEQUENCE [GENOMIC DNA]</scope>
    <source>
        <strain>SpF94</strain>
    </source>
</reference>
<comment type="function">
    <text evidence="1">Cleaves peptides in various proteins in a process that requires ATP hydrolysis. Has a chymotrypsin-like activity. Plays a major role in the degradation of misfolded proteins.</text>
</comment>
<comment type="catalytic activity">
    <reaction evidence="1">
        <text>Hydrolysis of proteins to small peptides in the presence of ATP and magnesium. alpha-casein is the usual test substrate. In the absence of ATP, only oligopeptides shorter than five residues are hydrolyzed (such as succinyl-Leu-Tyr-|-NHMec, and Leu-Tyr-Leu-|-Tyr-Trp, in which cleavage of the -Tyr-|-Leu- and -Tyr-|-Trp bonds also occurs).</text>
        <dbReference type="EC" id="3.4.21.92"/>
    </reaction>
</comment>
<comment type="subunit">
    <text evidence="1">Fourteen ClpP subunits assemble into 2 heptameric rings which stack back to back to give a disk-like structure with a central cavity, resembling the structure of eukaryotic proteasomes.</text>
</comment>
<comment type="subcellular location">
    <subcellularLocation>
        <location evidence="1">Cytoplasm</location>
    </subcellularLocation>
</comment>
<comment type="similarity">
    <text evidence="1">Belongs to the peptidase S14 family.</text>
</comment>
<dbReference type="EC" id="3.4.21.92" evidence="1"/>
<dbReference type="EMBL" id="AF150957">
    <property type="protein sequence ID" value="AAD37435.1"/>
    <property type="molecule type" value="Genomic_DNA"/>
</dbReference>
<dbReference type="MEROPS" id="S14.001"/>
<dbReference type="GO" id="GO:0005737">
    <property type="term" value="C:cytoplasm"/>
    <property type="evidence" value="ECO:0007669"/>
    <property type="project" value="UniProtKB-SubCell"/>
</dbReference>
<dbReference type="GO" id="GO:0009368">
    <property type="term" value="C:endopeptidase Clp complex"/>
    <property type="evidence" value="ECO:0007669"/>
    <property type="project" value="TreeGrafter"/>
</dbReference>
<dbReference type="GO" id="GO:0004176">
    <property type="term" value="F:ATP-dependent peptidase activity"/>
    <property type="evidence" value="ECO:0007669"/>
    <property type="project" value="InterPro"/>
</dbReference>
<dbReference type="GO" id="GO:0051117">
    <property type="term" value="F:ATPase binding"/>
    <property type="evidence" value="ECO:0007669"/>
    <property type="project" value="TreeGrafter"/>
</dbReference>
<dbReference type="GO" id="GO:0004252">
    <property type="term" value="F:serine-type endopeptidase activity"/>
    <property type="evidence" value="ECO:0007669"/>
    <property type="project" value="UniProtKB-UniRule"/>
</dbReference>
<dbReference type="GO" id="GO:0006515">
    <property type="term" value="P:protein quality control for misfolded or incompletely synthesized proteins"/>
    <property type="evidence" value="ECO:0007669"/>
    <property type="project" value="TreeGrafter"/>
</dbReference>
<dbReference type="CDD" id="cd07017">
    <property type="entry name" value="S14_ClpP_2"/>
    <property type="match status" value="1"/>
</dbReference>
<dbReference type="FunFam" id="3.90.226.10:FF:000001">
    <property type="entry name" value="ATP-dependent Clp protease proteolytic subunit"/>
    <property type="match status" value="1"/>
</dbReference>
<dbReference type="Gene3D" id="3.90.226.10">
    <property type="entry name" value="2-enoyl-CoA Hydratase, Chain A, domain 1"/>
    <property type="match status" value="1"/>
</dbReference>
<dbReference type="HAMAP" id="MF_00444">
    <property type="entry name" value="ClpP"/>
    <property type="match status" value="1"/>
</dbReference>
<dbReference type="InterPro" id="IPR001907">
    <property type="entry name" value="ClpP"/>
</dbReference>
<dbReference type="InterPro" id="IPR029045">
    <property type="entry name" value="ClpP/crotonase-like_dom_sf"/>
</dbReference>
<dbReference type="InterPro" id="IPR023562">
    <property type="entry name" value="ClpP/TepA"/>
</dbReference>
<dbReference type="InterPro" id="IPR033135">
    <property type="entry name" value="ClpP_His_AS"/>
</dbReference>
<dbReference type="InterPro" id="IPR018215">
    <property type="entry name" value="ClpP_Ser_AS"/>
</dbReference>
<dbReference type="NCBIfam" id="TIGR00493">
    <property type="entry name" value="clpP"/>
    <property type="match status" value="1"/>
</dbReference>
<dbReference type="NCBIfam" id="NF001368">
    <property type="entry name" value="PRK00277.1"/>
    <property type="match status" value="1"/>
</dbReference>
<dbReference type="NCBIfam" id="NF009205">
    <property type="entry name" value="PRK12553.1"/>
    <property type="match status" value="1"/>
</dbReference>
<dbReference type="PANTHER" id="PTHR10381">
    <property type="entry name" value="ATP-DEPENDENT CLP PROTEASE PROTEOLYTIC SUBUNIT"/>
    <property type="match status" value="1"/>
</dbReference>
<dbReference type="PANTHER" id="PTHR10381:SF11">
    <property type="entry name" value="ATP-DEPENDENT CLP PROTEASE PROTEOLYTIC SUBUNIT, MITOCHONDRIAL"/>
    <property type="match status" value="1"/>
</dbReference>
<dbReference type="Pfam" id="PF00574">
    <property type="entry name" value="CLP_protease"/>
    <property type="match status" value="1"/>
</dbReference>
<dbReference type="PRINTS" id="PR00127">
    <property type="entry name" value="CLPPROTEASEP"/>
</dbReference>
<dbReference type="SUPFAM" id="SSF52096">
    <property type="entry name" value="ClpP/crotonase"/>
    <property type="match status" value="1"/>
</dbReference>
<dbReference type="PROSITE" id="PS00382">
    <property type="entry name" value="CLP_PROTEASE_HIS"/>
    <property type="match status" value="1"/>
</dbReference>
<dbReference type="PROSITE" id="PS00381">
    <property type="entry name" value="CLP_PROTEASE_SER"/>
    <property type="match status" value="1"/>
</dbReference>
<protein>
    <recommendedName>
        <fullName evidence="1">ATP-dependent Clp protease proteolytic subunit</fullName>
        <ecNumber evidence="1">3.4.21.92</ecNumber>
    </recommendedName>
    <alternativeName>
        <fullName evidence="1">Endopeptidase Clp</fullName>
    </alternativeName>
</protein>